<feature type="chain" id="PRO_0000443877" description="Autophagy-related protein 5">
    <location>
        <begin position="1"/>
        <end position="269"/>
    </location>
</feature>
<feature type="cross-link" description="Glycyl lysine isopeptide (Lys-Gly) (interchain with G-Cter in ATG12)" evidence="1">
    <location>
        <position position="102"/>
    </location>
</feature>
<name>ATG5_BEAB2</name>
<reference key="1">
    <citation type="journal article" date="2013" name="Microbiology">
        <title>The autophagy gene BbATG5, involved in the formation of the autophagosome, contributes to cell differentiation and growth but is dispensable for pathogenesis in the entomopathogenic fungus Beauveria bassiana.</title>
        <authorList>
            <person name="Zhang L."/>
            <person name="Wang J."/>
            <person name="Xie X.Q."/>
            <person name="Keyhani N.O."/>
            <person name="Feng M.G."/>
            <person name="Ying S.H."/>
        </authorList>
    </citation>
    <scope>NUCLEOTIDE SEQUENCE [GENOMIC DNA / MRNA]</scope>
    <scope>FUNCTION</scope>
    <scope>DISRUPTION PHENOTYPE</scope>
    <source>
        <strain>ARSEF 2860</strain>
    </source>
</reference>
<reference key="2">
    <citation type="journal article" date="2012" name="Sci. Rep.">
        <title>Genomic perspectives on the evolution of fungal entomopathogenicity in Beauveria bassiana.</title>
        <authorList>
            <person name="Xiao G."/>
            <person name="Ying S.-H."/>
            <person name="Zheng P."/>
            <person name="Wang Z.-L."/>
            <person name="Zhang S."/>
            <person name="Xie X.-Q."/>
            <person name="Shang Y."/>
            <person name="St Leger R.J."/>
            <person name="Zhao G.-P."/>
            <person name="Wang C."/>
            <person name="Feng M.-G."/>
        </authorList>
    </citation>
    <scope>NUCLEOTIDE SEQUENCE [LARGE SCALE GENOMIC DNA]</scope>
    <source>
        <strain>ARSEF 2860</strain>
    </source>
</reference>
<reference key="3">
    <citation type="journal article" date="2017" name="Environ. Microbiol.">
        <title>Discovery of a new intravacuolar protein required for the autophagy, development and virulence of Beauveria bassiana.</title>
        <authorList>
            <person name="Chu Z.J."/>
            <person name="Sun H.H."/>
            <person name="Zhu X.G."/>
            <person name="Ying S.H."/>
            <person name="Feng M.G."/>
        </authorList>
    </citation>
    <scope>INDUCTION</scope>
</reference>
<accession>J5JH39</accession>
<accession>G9JKB6</accession>
<keyword id="KW-0072">Autophagy</keyword>
<keyword id="KW-1017">Isopeptide bond</keyword>
<keyword id="KW-0472">Membrane</keyword>
<keyword id="KW-0653">Protein transport</keyword>
<keyword id="KW-1185">Reference proteome</keyword>
<keyword id="KW-0813">Transport</keyword>
<keyword id="KW-0832">Ubl conjugation</keyword>
<protein>
    <recommendedName>
        <fullName evidence="4">Autophagy-related protein 5</fullName>
    </recommendedName>
</protein>
<evidence type="ECO:0000250" key="1">
    <source>
        <dbReference type="UniProtKB" id="Q12380"/>
    </source>
</evidence>
<evidence type="ECO:0000269" key="2">
    <source>
    </source>
</evidence>
<evidence type="ECO:0000269" key="3">
    <source>
    </source>
</evidence>
<evidence type="ECO:0000303" key="4">
    <source>
    </source>
</evidence>
<evidence type="ECO:0000305" key="5"/>
<proteinExistence type="evidence at transcript level"/>
<sequence>MSAPISQALWDARIPLLITHPLAPTTPFITSIPRFSYLALLLPRLSAFFNTPCSSFHFEDVVLRNLPVGLLVDLYQPSLPWRLIVNDGVSWDISDTFLNAAKEADFIRNGNANQIMKLSKDDTRQLWHAVIDNDLAAFSRINNRLLNAPTALKHVPMRIYLPLAPGGSAGGDVGEPTVDQQQGGGDASAAGAFKIIQSLVQPLGADRRPRLLGQVLRETMPKLFPSSRDPVMANVLLHGVAVPFNAPLADLMREAAYFDGWLSFVVVVL</sequence>
<dbReference type="EMBL" id="JN837483">
    <property type="protein sequence ID" value="AET98917.1"/>
    <property type="molecule type" value="mRNA"/>
</dbReference>
<dbReference type="EMBL" id="JX392329">
    <property type="protein sequence ID" value="AFS59909.1"/>
    <property type="molecule type" value="Genomic_DNA"/>
</dbReference>
<dbReference type="EMBL" id="JH725181">
    <property type="protein sequence ID" value="EJP62801.1"/>
    <property type="molecule type" value="Genomic_DNA"/>
</dbReference>
<dbReference type="RefSeq" id="XP_008601507.1">
    <property type="nucleotide sequence ID" value="XM_008603285.1"/>
</dbReference>
<dbReference type="SMR" id="J5JH39"/>
<dbReference type="STRING" id="655819.J5JH39"/>
<dbReference type="GeneID" id="19891200"/>
<dbReference type="HOGENOM" id="CLU_051894_2_0_1"/>
<dbReference type="InParanoid" id="J5JH39"/>
<dbReference type="OrthoDB" id="4486at474943"/>
<dbReference type="Proteomes" id="UP000002762">
    <property type="component" value="Unassembled WGS sequence"/>
</dbReference>
<dbReference type="GO" id="GO:0034274">
    <property type="term" value="C:Atg12-Atg5-Atg16 complex"/>
    <property type="evidence" value="ECO:0007669"/>
    <property type="project" value="TreeGrafter"/>
</dbReference>
<dbReference type="GO" id="GO:0005776">
    <property type="term" value="C:autophagosome"/>
    <property type="evidence" value="ECO:0007669"/>
    <property type="project" value="TreeGrafter"/>
</dbReference>
<dbReference type="GO" id="GO:0044233">
    <property type="term" value="C:mitochondria-associated endoplasmic reticulum membrane contact site"/>
    <property type="evidence" value="ECO:0007669"/>
    <property type="project" value="TreeGrafter"/>
</dbReference>
<dbReference type="GO" id="GO:0061908">
    <property type="term" value="C:phagophore"/>
    <property type="evidence" value="ECO:0007669"/>
    <property type="project" value="TreeGrafter"/>
</dbReference>
<dbReference type="GO" id="GO:0034045">
    <property type="term" value="C:phagophore assembly site membrane"/>
    <property type="evidence" value="ECO:0007669"/>
    <property type="project" value="UniProtKB-SubCell"/>
</dbReference>
<dbReference type="GO" id="GO:0019776">
    <property type="term" value="F:Atg8-family ligase activity"/>
    <property type="evidence" value="ECO:0007669"/>
    <property type="project" value="TreeGrafter"/>
</dbReference>
<dbReference type="GO" id="GO:0000422">
    <property type="term" value="P:autophagy of mitochondrion"/>
    <property type="evidence" value="ECO:0007669"/>
    <property type="project" value="TreeGrafter"/>
</dbReference>
<dbReference type="GO" id="GO:0006995">
    <property type="term" value="P:cellular response to nitrogen starvation"/>
    <property type="evidence" value="ECO:0007669"/>
    <property type="project" value="TreeGrafter"/>
</dbReference>
<dbReference type="GO" id="GO:0034727">
    <property type="term" value="P:piecemeal microautophagy of the nucleus"/>
    <property type="evidence" value="ECO:0007669"/>
    <property type="project" value="TreeGrafter"/>
</dbReference>
<dbReference type="GO" id="GO:0015031">
    <property type="term" value="P:protein transport"/>
    <property type="evidence" value="ECO:0007669"/>
    <property type="project" value="UniProtKB-KW"/>
</dbReference>
<dbReference type="Gene3D" id="3.10.20.620">
    <property type="match status" value="1"/>
</dbReference>
<dbReference type="Gene3D" id="1.10.246.190">
    <property type="entry name" value="Autophagy protein Apg5, helix rich domain"/>
    <property type="match status" value="1"/>
</dbReference>
<dbReference type="Gene3D" id="3.10.20.90">
    <property type="entry name" value="Phosphatidylinositol 3-kinase Catalytic Subunit, Chain A, domain 1"/>
    <property type="match status" value="1"/>
</dbReference>
<dbReference type="InterPro" id="IPR007239">
    <property type="entry name" value="Atg5"/>
</dbReference>
<dbReference type="InterPro" id="IPR048940">
    <property type="entry name" value="ATG5_HBR"/>
</dbReference>
<dbReference type="InterPro" id="IPR042526">
    <property type="entry name" value="Atg5_HR"/>
</dbReference>
<dbReference type="InterPro" id="IPR048939">
    <property type="entry name" value="ATG5_UblA"/>
</dbReference>
<dbReference type="InterPro" id="IPR042527">
    <property type="entry name" value="Atg5_UblA_dom_sf"/>
</dbReference>
<dbReference type="InterPro" id="IPR048318">
    <property type="entry name" value="ATG5_UblB"/>
</dbReference>
<dbReference type="PANTHER" id="PTHR13040">
    <property type="entry name" value="AUTOPHAGY PROTEIN 5"/>
    <property type="match status" value="1"/>
</dbReference>
<dbReference type="PANTHER" id="PTHR13040:SF2">
    <property type="entry name" value="AUTOPHAGY PROTEIN 5"/>
    <property type="match status" value="1"/>
</dbReference>
<dbReference type="Pfam" id="PF20637">
    <property type="entry name" value="ATG5_HBR"/>
    <property type="match status" value="1"/>
</dbReference>
<dbReference type="Pfam" id="PF20638">
    <property type="entry name" value="ATG5_UblA"/>
    <property type="match status" value="1"/>
</dbReference>
<dbReference type="Pfam" id="PF04106">
    <property type="entry name" value="ATG5_UblB"/>
    <property type="match status" value="1"/>
</dbReference>
<comment type="function">
    <text evidence="1 2">Involved in cytoplasm to vacuole transport (Cvt) and autophagic vesicle formation (By similarity). Autophagy is essential for maintenance of amino acid levels and protein synthesis under nitrogen starvation (By similarity). Required for selective autophagic degradation of the nucleus (nucleophagy) (By similarity). Also required for mitophagy, which eliminates defective or superfluous mitochondria in order to fulfill cellular energy requirements and prevent excess ROS production (By similarity). Conjugation with ATG12, through a ubiquitin-like conjugating system involving ATG7 as an E1-like activating enzyme and ATG10 as an E2-like conjugating enzyme, is essential for its function (By similarity). The ATG12-ATG5 conjugate acts as an E3-like enzyme which is required for lipidation of ATG8 and ATG8 association to the vesicle membranes (By similarity). ATG12-ATG5 rearranges the ATG3 catalytic center and enhances its E2 activity (By similarity). Required for proper vegetative growth, asexual/sexual reproduction, but, unlike several plant and animal pathogenic fungi, where ATG5 is required for infection, in B.bassiana it is dispensable for pathogenesis (PubMed:23197175).</text>
</comment>
<comment type="subunit">
    <text evidence="1">Conjugated with ATG12 (By similarity). The ATG5-ATG12 conjugate forms a complex with several units of ATG16 (By similarity). The ATG12-ATG5 conjugate also associates with ATG3 (By similarity).</text>
</comment>
<comment type="subcellular location">
    <subcellularLocation>
        <location evidence="1">Preautophagosomal structure membrane</location>
        <topology evidence="1">Peripheral membrane protein</topology>
    </subcellularLocation>
    <text evidence="1">Localizes to the isolation membrane (IM), a membrane sac which is generated from the pre-autophagosomal structure (PAS) (By similarity). Ultimately, the IM expands to become a mature autophagosome (By similarity). Localizes also to a dot at the junction between the IM and the vacuolar membrane, termed the vacuole-IM contact site (VICS) (By similarity). Correct localization to the PAS requires ATG21 (By similarity).</text>
</comment>
<comment type="induction">
    <text evidence="3">Expression is reduced when the vacuolar protein VLP4 is absent (PubMed:28557308).</text>
</comment>
<comment type="PTM">
    <text evidence="1">Conjugated to ATG12; which is essential for autophagy (By similarity). Conjugation with ATG12 involves ATG7 as an E1-like activating enzyme and ATG10 as an E2-like conjugating enzyme (By similarity).</text>
</comment>
<comment type="disruption phenotype">
    <text evidence="2">Blocks autophagy and displays increased sensitivity to nutrient limitation, with decreased conidial germination, growth and sporulation (PubMed:23197175). Leads only to a modest decrease in virulence (PubMed:23197175).</text>
</comment>
<comment type="similarity">
    <text evidence="5">Belongs to the ATG5 family.</text>
</comment>
<gene>
    <name evidence="4" type="primary">ATG5</name>
    <name type="ORF">BBA_08188</name>
</gene>
<organism>
    <name type="scientific">Beauveria bassiana (strain ARSEF 2860)</name>
    <name type="common">White muscardine disease fungus</name>
    <name type="synonym">Tritirachium shiotae</name>
    <dbReference type="NCBI Taxonomy" id="655819"/>
    <lineage>
        <taxon>Eukaryota</taxon>
        <taxon>Fungi</taxon>
        <taxon>Dikarya</taxon>
        <taxon>Ascomycota</taxon>
        <taxon>Pezizomycotina</taxon>
        <taxon>Sordariomycetes</taxon>
        <taxon>Hypocreomycetidae</taxon>
        <taxon>Hypocreales</taxon>
        <taxon>Cordycipitaceae</taxon>
        <taxon>Beauveria</taxon>
    </lineage>
</organism>